<keyword id="KW-0067">ATP-binding</keyword>
<keyword id="KW-0150">Chloroplast</keyword>
<keyword id="KW-0436">Ligase</keyword>
<keyword id="KW-0547">Nucleotide-binding</keyword>
<keyword id="KW-0934">Plastid</keyword>
<keyword id="KW-0819">tRNA processing</keyword>
<protein>
    <recommendedName>
        <fullName evidence="1">tRNA(Ile)-lysidine synthase, chloroplastic</fullName>
        <ecNumber evidence="1">6.3.4.19</ecNumber>
    </recommendedName>
    <alternativeName>
        <fullName evidence="1">tRNA(Ile)-2-lysyl-cytidine synthase</fullName>
    </alternativeName>
    <alternativeName>
        <fullName evidence="1">tRNA(Ile)-lysidine synthetase</fullName>
    </alternativeName>
</protein>
<sequence>MKGGRVQVITKNNSIAKHQLGEYAVHIYVLLYYLSMREILREFEEACLLQGLVSPSTRLLISCSGGQDSVTLLFLLCQLQTNWTWRLGVVYCNHMWRYGSIETPAKLARICLLFGVSCSFSVSGSRLQKEEEGRSWRLRVLCRMSSIHSWFYISTGHTASDRIETLLSNVLRGSSSSGMRSINWYTSLDTQVGHRRISIPIIRPLLGISRLELRNYANRWKLPLCYDPSNQDQRIRRNRIRHELLPYLRHWWNPQIDRLLAQTAEVTSWESSYYDLICTQICQQYEWIGDGGVRFPWRIFHSIPTSLHSRILWIFLNRALVFLNPAHGFQGNFDILQFLLETKTCHCRHGSIYISKDVDWLRMTLVK</sequence>
<accession>Q9T390</accession>
<proteinExistence type="inferred from homology"/>
<dbReference type="EC" id="6.3.4.19" evidence="1"/>
<dbReference type="EMBL" id="AF137379">
    <property type="protein sequence ID" value="AAD54930.1"/>
    <property type="molecule type" value="Genomic_DNA"/>
</dbReference>
<dbReference type="EMBL" id="AF137379">
    <property type="protein sequence ID" value="AAD54859.1"/>
    <property type="molecule type" value="Genomic_DNA"/>
</dbReference>
<dbReference type="RefSeq" id="NP_050888.1">
    <property type="nucleotide sequence ID" value="NC_000927.1"/>
</dbReference>
<dbReference type="RefSeq" id="NP_050959.1">
    <property type="nucleotide sequence ID" value="NC_000927.1"/>
</dbReference>
<dbReference type="SMR" id="Q9T390"/>
<dbReference type="GeneID" id="801973"/>
<dbReference type="GeneID" id="802039"/>
<dbReference type="GO" id="GO:0009507">
    <property type="term" value="C:chloroplast"/>
    <property type="evidence" value="ECO:0007669"/>
    <property type="project" value="UniProtKB-SubCell"/>
</dbReference>
<dbReference type="GO" id="GO:0005524">
    <property type="term" value="F:ATP binding"/>
    <property type="evidence" value="ECO:0007669"/>
    <property type="project" value="UniProtKB-UniRule"/>
</dbReference>
<dbReference type="GO" id="GO:0032267">
    <property type="term" value="F:tRNA(Ile)-lysidine synthase activity"/>
    <property type="evidence" value="ECO:0007669"/>
    <property type="project" value="UniProtKB-EC"/>
</dbReference>
<dbReference type="GO" id="GO:0006400">
    <property type="term" value="P:tRNA modification"/>
    <property type="evidence" value="ECO:0007669"/>
    <property type="project" value="UniProtKB-UniRule"/>
</dbReference>
<dbReference type="CDD" id="cd01992">
    <property type="entry name" value="TilS_N"/>
    <property type="match status" value="1"/>
</dbReference>
<dbReference type="Gene3D" id="3.40.50.620">
    <property type="entry name" value="HUPs"/>
    <property type="match status" value="1"/>
</dbReference>
<dbReference type="HAMAP" id="MF_01161">
    <property type="entry name" value="tRNA_Ile_lys_synt"/>
    <property type="match status" value="1"/>
</dbReference>
<dbReference type="InterPro" id="IPR014729">
    <property type="entry name" value="Rossmann-like_a/b/a_fold"/>
</dbReference>
<dbReference type="InterPro" id="IPR011063">
    <property type="entry name" value="TilS/TtcA_N"/>
</dbReference>
<dbReference type="InterPro" id="IPR012094">
    <property type="entry name" value="tRNA_Ile_lys_synt"/>
</dbReference>
<dbReference type="InterPro" id="IPR012795">
    <property type="entry name" value="tRNA_Ile_lys_synt_N"/>
</dbReference>
<dbReference type="NCBIfam" id="TIGR02432">
    <property type="entry name" value="lysidine_TilS_N"/>
    <property type="match status" value="1"/>
</dbReference>
<dbReference type="PANTHER" id="PTHR43033">
    <property type="entry name" value="TRNA(ILE)-LYSIDINE SYNTHASE-RELATED"/>
    <property type="match status" value="1"/>
</dbReference>
<dbReference type="PANTHER" id="PTHR43033:SF1">
    <property type="entry name" value="TRNA(ILE)-LYSIDINE SYNTHASE-RELATED"/>
    <property type="match status" value="1"/>
</dbReference>
<dbReference type="Pfam" id="PF01171">
    <property type="entry name" value="ATP_bind_3"/>
    <property type="match status" value="1"/>
</dbReference>
<dbReference type="SUPFAM" id="SSF52402">
    <property type="entry name" value="Adenine nucleotide alpha hydrolases-like"/>
    <property type="match status" value="1"/>
</dbReference>
<dbReference type="SUPFAM" id="SSF82829">
    <property type="entry name" value="MesJ substrate recognition domain-like"/>
    <property type="match status" value="1"/>
</dbReference>
<evidence type="ECO:0000255" key="1">
    <source>
        <dbReference type="HAMAP-Rule" id="MF_01161"/>
    </source>
</evidence>
<comment type="function">
    <text evidence="1">Ligates lysine onto the cytidine present at position 34 of the AUA codon-specific tRNA(Ile) that contains the anticodon CAU, in an ATP-dependent manner. Cytidine is converted to lysidine, thus changing the amino acid specificity of the tRNA from methionine to isoleucine.</text>
</comment>
<comment type="catalytic activity">
    <reaction evidence="1">
        <text>cytidine(34) in tRNA(Ile2) + L-lysine + ATP = lysidine(34) in tRNA(Ile2) + AMP + diphosphate + H(+)</text>
        <dbReference type="Rhea" id="RHEA:43744"/>
        <dbReference type="Rhea" id="RHEA-COMP:10625"/>
        <dbReference type="Rhea" id="RHEA-COMP:10670"/>
        <dbReference type="ChEBI" id="CHEBI:15378"/>
        <dbReference type="ChEBI" id="CHEBI:30616"/>
        <dbReference type="ChEBI" id="CHEBI:32551"/>
        <dbReference type="ChEBI" id="CHEBI:33019"/>
        <dbReference type="ChEBI" id="CHEBI:82748"/>
        <dbReference type="ChEBI" id="CHEBI:83665"/>
        <dbReference type="ChEBI" id="CHEBI:456215"/>
        <dbReference type="EC" id="6.3.4.19"/>
    </reaction>
</comment>
<comment type="subcellular location">
    <subcellularLocation>
        <location>Plastid</location>
        <location>Chloroplast</location>
    </subcellularLocation>
</comment>
<comment type="domain">
    <text>The N-terminal region contains the highly conserved SGGXDS motif, predicted to be a P-loop motif involved in ATP binding.</text>
</comment>
<comment type="similarity">
    <text evidence="1">Belongs to the tRNA(Ile)-lysidine synthase family.</text>
</comment>
<gene>
    <name evidence="1" type="primary">tilS</name>
    <name type="synonym">ycf62</name>
</gene>
<name>TILS_NEPOL</name>
<reference key="1">
    <citation type="journal article" date="1999" name="Proc. Natl. Acad. Sci. U.S.A.">
        <title>The complete chloroplast DNA sequence of the green alga Nephroselmis olivacea: insights into the architecture of ancestral chloroplast genomes.</title>
        <authorList>
            <person name="Turmel M."/>
            <person name="Otis C."/>
            <person name="Lemieux C."/>
        </authorList>
    </citation>
    <scope>NUCLEOTIDE SEQUENCE [LARGE SCALE GENOMIC DNA]</scope>
    <source>
        <strain>NIES-484 / S-N-5-8</strain>
    </source>
</reference>
<geneLocation type="chloroplast"/>
<organism>
    <name type="scientific">Nephroselmis olivacea</name>
    <name type="common">Green alga</name>
    <dbReference type="NCBI Taxonomy" id="31312"/>
    <lineage>
        <taxon>Eukaryota</taxon>
        <taxon>Viridiplantae</taxon>
        <taxon>Chlorophyta</taxon>
        <taxon>Nephroselmidophyceae</taxon>
        <taxon>Nephroselmidales</taxon>
        <taxon>Nephroselmidaceae</taxon>
        <taxon>Nephroselmis</taxon>
    </lineage>
</organism>
<feature type="chain" id="PRO_0000181820" description="tRNA(Ile)-lysidine synthase, chloroplastic">
    <location>
        <begin position="1"/>
        <end position="367"/>
    </location>
</feature>
<feature type="binding site" evidence="1">
    <location>
        <begin position="64"/>
        <end position="69"/>
    </location>
    <ligand>
        <name>ATP</name>
        <dbReference type="ChEBI" id="CHEBI:30616"/>
    </ligand>
</feature>